<sequence length="1178" mass="135025">MADADEYSTAPTQQEITPLQTTATIINAISGECITTNVDFFVSLDKFKQFIARKWKIPPDQLLILLPYGNKLKPSMFKELLINRSFTLNDFYVYDRRLFSLVSKPTPTNLLTSKDSNPMNSPNSNDLTETLEYLIKNSHISQYQGSDTIMIKPMPSPLEDADVDLSRLNYHSVTSLLTTNLGWLSALEIDVHYFKSLIPDIIAHIKRIFDGLTVCSQYLKLYCFDVESLYNSNVQFLNQLVDNGMTSKWEKCFNDTLSKLTALEGDSLQKFINIESLLENEKSVKILNHSINGKLNKIKREIDENASFRDIITVNIDRLRQMFTPNESKFELEDQMAESFEVLVSEMRTRSRNVLDKEEEEFNSQEFLKSMNVMLEKDKKESVKTLFTISQALYSQIGELIDLKKSLQKHAVAILGNIAFTQMEILGIKRLLLNECNKDLELYKKYEVEFAQVEDLPLIYGLYLIEKYRRLSWFQQILSFISNFNQDLELFKQNELRTRNKWVKNFGSIATVFCEDLLSSSDFKRLNEYHSHTSPPNEDEEDENENSIANYRQDLVKVSQAIDNYMTQIKETDVSEPIIDLLSKTLFETKRFHIIYSNFKNNNNNSSNGNSISPEGSIALKSDDVVKGYKTRIKKLESLLHEFQYSDIGHWPQGVLNTHLKPFRGSATSINKKKFLGASVLLEPANISEVNIDSVSQANNHQIQELESNVDDLLHQLQLLKEENNRKSMQISEMGKKISDLEVEKTAYRETLTNLNQELARLTNEEQSHRTEIFTLNASFKKQLNDIISQDNEKIEKLTGDYDDVSKSRERLQMDLDESNKKHEQEVNLLKADIERLGKQIVTSEKSYAETNSSSMEKGEKFETIPLAEDPGRENQISAYTQTLQDRIFDIISTNIFILENIGLLLTFDNNNNIQIRRVKGLKKGTAQSNILDESTQMLDAHDNSLIKSPVFQKLKDEYELIKSVANGSEKDTQQSIFLGNITQLYDNKLYEVAVIRRFKDIETLAKKLTKENKIKRTLLERFQREKVTLRNFQIGDLALFLPTRENVNSVGSMSSSTSSLSSSFSSVDLSTPPPLDAMSIQSSPSVIHSNVINQASISGRDKNKLMRPWAAFTAFEESTRYFLKDEKGLTKGKEWFVGRIVTLEHFVADSPSNNPFRLPKGSVWFQVTAVVVSYQGV</sequence>
<organism>
    <name type="scientific">Saccharomyces cerevisiae (strain ATCC 204508 / S288c)</name>
    <name type="common">Baker's yeast</name>
    <dbReference type="NCBI Taxonomy" id="559292"/>
    <lineage>
        <taxon>Eukaryota</taxon>
        <taxon>Fungi</taxon>
        <taxon>Dikarya</taxon>
        <taxon>Ascomycota</taxon>
        <taxon>Saccharomycotina</taxon>
        <taxon>Saccharomycetes</taxon>
        <taxon>Saccharomycetales</taxon>
        <taxon>Saccharomycetaceae</taxon>
        <taxon>Saccharomyces</taxon>
    </lineage>
</organism>
<evidence type="ECO:0000255" key="1"/>
<evidence type="ECO:0000269" key="2">
    <source>
    </source>
</evidence>
<evidence type="ECO:0000269" key="3">
    <source>
    </source>
</evidence>
<evidence type="ECO:0000269" key="4">
    <source>
    </source>
</evidence>
<evidence type="ECO:0000269" key="5">
    <source>
    </source>
</evidence>
<evidence type="ECO:0000269" key="6">
    <source>
    </source>
</evidence>
<evidence type="ECO:0000269" key="7">
    <source>
    </source>
</evidence>
<evidence type="ECO:0000269" key="8">
    <source>
    </source>
</evidence>
<evidence type="ECO:0000269" key="9">
    <source>
    </source>
</evidence>
<evidence type="ECO:0000269" key="10">
    <source>
    </source>
</evidence>
<evidence type="ECO:0000269" key="11">
    <source>
    </source>
</evidence>
<evidence type="ECO:0000269" key="12">
    <source>
    </source>
</evidence>
<evidence type="ECO:0000269" key="13">
    <source>
    </source>
</evidence>
<evidence type="ECO:0000269" key="14">
    <source>
    </source>
</evidence>
<evidence type="ECO:0000269" key="15">
    <source>
    </source>
</evidence>
<evidence type="ECO:0000269" key="16">
    <source>
    </source>
</evidence>
<evidence type="ECO:0000269" key="17">
    <source>
    </source>
</evidence>
<evidence type="ECO:0000269" key="18">
    <source>
    </source>
</evidence>
<evidence type="ECO:0000269" key="19">
    <source>
    </source>
</evidence>
<evidence type="ECO:0000269" key="20">
    <source>
    </source>
</evidence>
<evidence type="ECO:0000269" key="21">
    <source>
    </source>
</evidence>
<evidence type="ECO:0000269" key="22">
    <source>
    </source>
</evidence>
<evidence type="ECO:0000269" key="23">
    <source>
    </source>
</evidence>
<evidence type="ECO:0000269" key="24">
    <source>
    </source>
</evidence>
<evidence type="ECO:0000269" key="25">
    <source>
    </source>
</evidence>
<evidence type="ECO:0000269" key="26">
    <source>
    </source>
</evidence>
<evidence type="ECO:0000269" key="27">
    <source>
    </source>
</evidence>
<evidence type="ECO:0000269" key="28">
    <source>
    </source>
</evidence>
<evidence type="ECO:0000269" key="29">
    <source>
    </source>
</evidence>
<evidence type="ECO:0000269" key="30">
    <source>
    </source>
</evidence>
<evidence type="ECO:0000269" key="31">
    <source>
    </source>
</evidence>
<evidence type="ECO:0000269" key="32">
    <source>
    </source>
</evidence>
<evidence type="ECO:0000269" key="33">
    <source>
    </source>
</evidence>
<evidence type="ECO:0000269" key="34">
    <source>
    </source>
</evidence>
<evidence type="ECO:0000269" key="35">
    <source>
    </source>
</evidence>
<evidence type="ECO:0000269" key="36">
    <source>
    </source>
</evidence>
<evidence type="ECO:0000269" key="37">
    <source>
    </source>
</evidence>
<evidence type="ECO:0000269" key="38">
    <source>
    </source>
</evidence>
<evidence type="ECO:0000269" key="39">
    <source>
    </source>
</evidence>
<evidence type="ECO:0000269" key="40">
    <source>
    </source>
</evidence>
<evidence type="ECO:0000305" key="41"/>
<evidence type="ECO:0007829" key="42">
    <source>
        <dbReference type="PDB" id="6VZF"/>
    </source>
</evidence>
<gene>
    <name type="primary">ATG11</name>
    <name type="synonym">CVT9</name>
    <name type="ordered locus">YPR049C</name>
    <name type="ORF">YP9499.07c</name>
</gene>
<feature type="chain" id="PRO_0000124554" description="Autophagy-related protein 11">
    <location>
        <begin position="1"/>
        <end position="1178"/>
    </location>
</feature>
<feature type="coiled-coil region" evidence="1">
    <location>
        <begin position="538"/>
        <end position="572"/>
    </location>
</feature>
<feature type="coiled-coil region" evidence="1">
    <location>
        <begin position="696"/>
        <end position="850"/>
    </location>
</feature>
<feature type="helix" evidence="42">
    <location>
        <begin position="702"/>
        <end position="783"/>
    </location>
</feature>
<protein>
    <recommendedName>
        <fullName>Autophagy-related protein 11</fullName>
    </recommendedName>
    <alternativeName>
        <fullName>Cytoplasm to vacuole targeting protein 9</fullName>
    </alternativeName>
</protein>
<dbReference type="EMBL" id="Z71255">
    <property type="protein sequence ID" value="CAA94996.1"/>
    <property type="molecule type" value="Genomic_DNA"/>
</dbReference>
<dbReference type="EMBL" id="Z49219">
    <property type="protein sequence ID" value="CAA89169.1"/>
    <property type="molecule type" value="Genomic_DNA"/>
</dbReference>
<dbReference type="EMBL" id="BK006949">
    <property type="protein sequence ID" value="DAA11473.1"/>
    <property type="molecule type" value="Genomic_DNA"/>
</dbReference>
<dbReference type="PIR" id="S54073">
    <property type="entry name" value="S54073"/>
</dbReference>
<dbReference type="RefSeq" id="NP_015374.1">
    <property type="nucleotide sequence ID" value="NM_001184146.1"/>
</dbReference>
<dbReference type="PDB" id="6VZF">
    <property type="method" value="X-ray"/>
    <property type="resolution" value="2.03 A"/>
    <property type="chains" value="A=699-800"/>
</dbReference>
<dbReference type="PDBsum" id="6VZF"/>
<dbReference type="SMR" id="Q12527"/>
<dbReference type="BioGRID" id="36225">
    <property type="interactions" value="178"/>
</dbReference>
<dbReference type="DIP" id="DIP-1492N"/>
<dbReference type="FunCoup" id="Q12527">
    <property type="interactions" value="217"/>
</dbReference>
<dbReference type="IntAct" id="Q12527">
    <property type="interactions" value="30"/>
</dbReference>
<dbReference type="MINT" id="Q12527"/>
<dbReference type="STRING" id="4932.YPR049C"/>
<dbReference type="TCDB" id="9.A.15.1.1">
    <property type="family name" value="the autophagy-related phagophore-formation transporter (apt) family"/>
</dbReference>
<dbReference type="iPTMnet" id="Q12527"/>
<dbReference type="PaxDb" id="4932-YPR049C"/>
<dbReference type="PeptideAtlas" id="Q12527"/>
<dbReference type="EnsemblFungi" id="YPR049C_mRNA">
    <property type="protein sequence ID" value="YPR049C"/>
    <property type="gene ID" value="YPR049C"/>
</dbReference>
<dbReference type="GeneID" id="856162"/>
<dbReference type="KEGG" id="sce:YPR049C"/>
<dbReference type="AGR" id="SGD:S000006253"/>
<dbReference type="SGD" id="S000006253">
    <property type="gene designation" value="ATG11"/>
</dbReference>
<dbReference type="VEuPathDB" id="FungiDB:YPR049C"/>
<dbReference type="eggNOG" id="ENOG502QVZE">
    <property type="taxonomic scope" value="Eukaryota"/>
</dbReference>
<dbReference type="HOGENOM" id="CLU_272501_0_0_1"/>
<dbReference type="InParanoid" id="Q12527"/>
<dbReference type="OMA" id="EIDVHYF"/>
<dbReference type="OrthoDB" id="447953at2759"/>
<dbReference type="BioCyc" id="YEAST:G3O-34204-MONOMER"/>
<dbReference type="Reactome" id="R-SCE-1632852">
    <property type="pathway name" value="Macroautophagy"/>
</dbReference>
<dbReference type="BioGRID-ORCS" id="856162">
    <property type="hits" value="0 hits in 10 CRISPR screens"/>
</dbReference>
<dbReference type="PRO" id="PR:Q12527"/>
<dbReference type="Proteomes" id="UP000002311">
    <property type="component" value="Chromosome XVI"/>
</dbReference>
<dbReference type="RNAct" id="Q12527">
    <property type="molecule type" value="protein"/>
</dbReference>
<dbReference type="GO" id="GO:1990316">
    <property type="term" value="C:Atg1/ULK1 kinase complex"/>
    <property type="evidence" value="ECO:0000318"/>
    <property type="project" value="GO_Central"/>
</dbReference>
<dbReference type="GO" id="GO:0000407">
    <property type="term" value="C:phagophore assembly site"/>
    <property type="evidence" value="ECO:0000314"/>
    <property type="project" value="SGD"/>
</dbReference>
<dbReference type="GO" id="GO:0034045">
    <property type="term" value="C:phagophore assembly site membrane"/>
    <property type="evidence" value="ECO:0000318"/>
    <property type="project" value="GO_Central"/>
</dbReference>
<dbReference type="GO" id="GO:0005774">
    <property type="term" value="C:vacuolar membrane"/>
    <property type="evidence" value="ECO:0007669"/>
    <property type="project" value="UniProtKB-SubCell"/>
</dbReference>
<dbReference type="GO" id="GO:0060090">
    <property type="term" value="F:molecular adaptor activity"/>
    <property type="evidence" value="ECO:0000316"/>
    <property type="project" value="SGD"/>
</dbReference>
<dbReference type="GO" id="GO:0019901">
    <property type="term" value="F:protein kinase binding"/>
    <property type="evidence" value="ECO:0000318"/>
    <property type="project" value="GO_Central"/>
</dbReference>
<dbReference type="GO" id="GO:0000149">
    <property type="term" value="F:SNARE binding"/>
    <property type="evidence" value="ECO:0000314"/>
    <property type="project" value="SGD"/>
</dbReference>
<dbReference type="GO" id="GO:0000045">
    <property type="term" value="P:autophagosome assembly"/>
    <property type="evidence" value="ECO:0000314"/>
    <property type="project" value="SGD"/>
</dbReference>
<dbReference type="GO" id="GO:0006914">
    <property type="term" value="P:autophagy"/>
    <property type="evidence" value="ECO:0000314"/>
    <property type="project" value="SGD"/>
</dbReference>
<dbReference type="GO" id="GO:0000422">
    <property type="term" value="P:autophagy of mitochondrion"/>
    <property type="evidence" value="ECO:0000315"/>
    <property type="project" value="SGD"/>
</dbReference>
<dbReference type="GO" id="GO:0006995">
    <property type="term" value="P:cellular response to nitrogen starvation"/>
    <property type="evidence" value="ECO:0000314"/>
    <property type="project" value="SGD"/>
</dbReference>
<dbReference type="GO" id="GO:0032258">
    <property type="term" value="P:cytoplasm to vacuole targeting by the Cvt pathway"/>
    <property type="evidence" value="ECO:0000315"/>
    <property type="project" value="SGD"/>
</dbReference>
<dbReference type="GO" id="GO:0000425">
    <property type="term" value="P:pexophagy"/>
    <property type="evidence" value="ECO:0000315"/>
    <property type="project" value="SGD"/>
</dbReference>
<dbReference type="GO" id="GO:0034727">
    <property type="term" value="P:piecemeal microautophagy of the nucleus"/>
    <property type="evidence" value="ECO:0000315"/>
    <property type="project" value="SGD"/>
</dbReference>
<dbReference type="GO" id="GO:2000786">
    <property type="term" value="P:positive regulation of autophagosome assembly"/>
    <property type="evidence" value="ECO:0000316"/>
    <property type="project" value="SGD"/>
</dbReference>
<dbReference type="GO" id="GO:0034497">
    <property type="term" value="P:protein localization to phagophore assembly site"/>
    <property type="evidence" value="ECO:0000314"/>
    <property type="project" value="SGD"/>
</dbReference>
<dbReference type="GO" id="GO:0031503">
    <property type="term" value="P:protein-containing complex localization"/>
    <property type="evidence" value="ECO:0000315"/>
    <property type="project" value="SGD"/>
</dbReference>
<dbReference type="GO" id="GO:0061709">
    <property type="term" value="P:reticulophagy"/>
    <property type="evidence" value="ECO:0000315"/>
    <property type="project" value="SGD"/>
</dbReference>
<dbReference type="GO" id="GO:0034517">
    <property type="term" value="P:ribophagy"/>
    <property type="evidence" value="ECO:0000315"/>
    <property type="project" value="SGD"/>
</dbReference>
<dbReference type="FunFam" id="1.10.287.1490:FF:000032">
    <property type="entry name" value="Atg11p"/>
    <property type="match status" value="1"/>
</dbReference>
<dbReference type="Gene3D" id="1.10.287.1490">
    <property type="match status" value="1"/>
</dbReference>
<dbReference type="InterPro" id="IPR040040">
    <property type="entry name" value="ATG11"/>
</dbReference>
<dbReference type="InterPro" id="IPR019460">
    <property type="entry name" value="Atg11_C"/>
</dbReference>
<dbReference type="InterPro" id="IPR045326">
    <property type="entry name" value="ATG17-like_dom"/>
</dbReference>
<dbReference type="PANTHER" id="PTHR13222">
    <property type="entry name" value="RB1-INDUCIBLE COILED-COIL"/>
    <property type="match status" value="1"/>
</dbReference>
<dbReference type="PANTHER" id="PTHR13222:SF1">
    <property type="entry name" value="RB1-INDUCIBLE COILED-COIL PROTEIN 1"/>
    <property type="match status" value="1"/>
</dbReference>
<dbReference type="Pfam" id="PF10377">
    <property type="entry name" value="ATG11"/>
    <property type="match status" value="1"/>
</dbReference>
<dbReference type="Pfam" id="PF04108">
    <property type="entry name" value="ATG17_like"/>
    <property type="match status" value="1"/>
</dbReference>
<comment type="function">
    <text evidence="2 3 4 5 7 8 9 10 11 12 13 14 15 16 17 18 19 20 21 23 24 25 27 28 29 30 31 32 33 34 35 36 37 38 40">Involved in cytoplasm to vacuole transport (Cvt), pexophagy, mitophagy and nucleophagy. Recruits mitochondria for their selective degradation via autophagy (mitophagy) during starvation, through its interaction with ATG32. Works as scaffold proteins that recruit ATG proteins to the pre-autophagosome (PAS), the site of vesicle/autophagosome formation. Required for ATG9 anterograde transport from the mitochondria to the PAS. Also recruits the ATG19-prAPE1 complex to the PAS. Required for the Cvt vesicles completion. Plays a significant role in life span extension.</text>
</comment>
<comment type="subunit">
    <text evidence="2 5 8 11 12 23 24 25 26 31 33 34 37 38 39">Homodimer and potential homooligomers. Interacts with ATG1 kinase (PubMed:10995454). Interacts with the ATG19 cargo protein transporter (PubMed:12479808, PubMed:15659643). Interacts with the ATG34 cargo protein transporter (PubMed:20639194). Interacts with ATG9 (PubMed:17178909, PubMed:17192412, PubMed:19371383, PubMed:31356628). Interacts with ATG17 (PubMed:15659643). Interacts with ATG20 (PubMed:15659643). Interacts with ATG30 (PubMed:23559066). Interacts with ATG32; to recruit ATG11 to mitochondria (PubMed:19619494, PubMed:19619495, PubMed:21757540, PubMed:22308029, PubMed:38964378). Interacts with ATG36 (PubMed:23559066). Interacts with YPT1 (PubMed:22509044).</text>
</comment>
<comment type="interaction">
    <interactant intactId="EBI-31977">
        <id>Q12527</id>
    </interactant>
    <interactant intactId="EBI-2657">
        <id>P53104</id>
        <label>ATG1</label>
    </interactant>
    <organismsDiffer>false</organismsDiffer>
    <experiments>3</experiments>
</comment>
<comment type="interaction">
    <interactant intactId="EBI-31977">
        <id>Q12527</id>
    </interactant>
    <interactant intactId="EBI-29291">
        <id>P35193</id>
        <label>ATG19</label>
    </interactant>
    <organismsDiffer>false</organismsDiffer>
    <experiments>5</experiments>
</comment>
<comment type="interaction">
    <interactant intactId="EBI-31977">
        <id>Q12527</id>
    </interactant>
    <interactant intactId="EBI-25256">
        <id>P40458</id>
        <label>ATG32</label>
    </interactant>
    <organismsDiffer>false</organismsDiffer>
    <experiments>2</experiments>
</comment>
<comment type="interaction">
    <interactant intactId="EBI-31977">
        <id>Q12527</id>
    </interactant>
    <interactant intactId="EBI-36362">
        <id>Q12292</id>
        <label>ATG34</label>
    </interactant>
    <organismsDiffer>false</organismsDiffer>
    <experiments>2</experiments>
</comment>
<comment type="interaction">
    <interactant intactId="EBI-31977">
        <id>Q12527</id>
    </interactant>
    <interactant intactId="EBI-33888">
        <id>Q06159</id>
        <label>ATG39</label>
    </interactant>
    <organismsDiffer>false</organismsDiffer>
    <experiments>2</experiments>
</comment>
<comment type="subcellular location">
    <subcellularLocation>
        <location>Preautophagosomal structure membrane</location>
        <topology>Peripheral membrane protein</topology>
    </subcellularLocation>
    <subcellularLocation>
        <location>Vacuole membrane</location>
        <topology>Peripheral membrane protein</topology>
    </subcellularLocation>
    <text>During pexophagy, accumulates in the vacuolar membrane region, where the peroxisomes contact the vacuole. ATG11 localization is dependent on ATG11-ATG30 interaction.</text>
</comment>
<comment type="PTM">
    <text evidence="22">Acetylated by the NuA4 histone acetyltransferase (HAT) complex.</text>
</comment>
<comment type="miscellaneous">
    <text evidence="6">Present with 86 molecules/cell in log phase SD medium.</text>
</comment>
<comment type="similarity">
    <text evidence="41">Belongs to the ATG11 family.</text>
</comment>
<accession>Q12527</accession>
<accession>D6W457</accession>
<proteinExistence type="evidence at protein level"/>
<keyword id="KW-0002">3D-structure</keyword>
<keyword id="KW-0007">Acetylation</keyword>
<keyword id="KW-0072">Autophagy</keyword>
<keyword id="KW-0175">Coiled coil</keyword>
<keyword id="KW-0472">Membrane</keyword>
<keyword id="KW-0653">Protein transport</keyword>
<keyword id="KW-1185">Reference proteome</keyword>
<keyword id="KW-0813">Transport</keyword>
<keyword id="KW-0926">Vacuole</keyword>
<name>ATG11_YEAST</name>
<reference key="1">
    <citation type="journal article" date="1997" name="Nature">
        <title>The nucleotide sequence of Saccharomyces cerevisiae chromosome XVI.</title>
        <authorList>
            <person name="Bussey H."/>
            <person name="Storms R.K."/>
            <person name="Ahmed A."/>
            <person name="Albermann K."/>
            <person name="Allen E."/>
            <person name="Ansorge W."/>
            <person name="Araujo R."/>
            <person name="Aparicio A."/>
            <person name="Barrell B.G."/>
            <person name="Badcock K."/>
            <person name="Benes V."/>
            <person name="Botstein D."/>
            <person name="Bowman S."/>
            <person name="Brueckner M."/>
            <person name="Carpenter J."/>
            <person name="Cherry J.M."/>
            <person name="Chung E."/>
            <person name="Churcher C.M."/>
            <person name="Coster F."/>
            <person name="Davis K."/>
            <person name="Davis R.W."/>
            <person name="Dietrich F.S."/>
            <person name="Delius H."/>
            <person name="DiPaolo T."/>
            <person name="Dubois E."/>
            <person name="Duesterhoeft A."/>
            <person name="Duncan M."/>
            <person name="Floeth M."/>
            <person name="Fortin N."/>
            <person name="Friesen J.D."/>
            <person name="Fritz C."/>
            <person name="Goffeau A."/>
            <person name="Hall J."/>
            <person name="Hebling U."/>
            <person name="Heumann K."/>
            <person name="Hilbert H."/>
            <person name="Hillier L.W."/>
            <person name="Hunicke-Smith S."/>
            <person name="Hyman R.W."/>
            <person name="Johnston M."/>
            <person name="Kalman S."/>
            <person name="Kleine K."/>
            <person name="Komp C."/>
            <person name="Kurdi O."/>
            <person name="Lashkari D."/>
            <person name="Lew H."/>
            <person name="Lin A."/>
            <person name="Lin D."/>
            <person name="Louis E.J."/>
            <person name="Marathe R."/>
            <person name="Messenguy F."/>
            <person name="Mewes H.-W."/>
            <person name="Mirtipati S."/>
            <person name="Moestl D."/>
            <person name="Mueller-Auer S."/>
            <person name="Namath A."/>
            <person name="Nentwich U."/>
            <person name="Oefner P."/>
            <person name="Pearson D."/>
            <person name="Petel F.X."/>
            <person name="Pohl T.M."/>
            <person name="Purnelle B."/>
            <person name="Rajandream M.A."/>
            <person name="Rechmann S."/>
            <person name="Rieger M."/>
            <person name="Riles L."/>
            <person name="Roberts D."/>
            <person name="Schaefer M."/>
            <person name="Scharfe M."/>
            <person name="Scherens B."/>
            <person name="Schramm S."/>
            <person name="Schroeder M."/>
            <person name="Sdicu A.-M."/>
            <person name="Tettelin H."/>
            <person name="Urrestarazu L.A."/>
            <person name="Ushinsky S."/>
            <person name="Vierendeels F."/>
            <person name="Vissers S."/>
            <person name="Voss H."/>
            <person name="Walsh S.V."/>
            <person name="Wambutt R."/>
            <person name="Wang Y."/>
            <person name="Wedler E."/>
            <person name="Wedler H."/>
            <person name="Winnett E."/>
            <person name="Zhong W.-W."/>
            <person name="Zollner A."/>
            <person name="Vo D.H."/>
            <person name="Hani J."/>
        </authorList>
    </citation>
    <scope>NUCLEOTIDE SEQUENCE [LARGE SCALE GENOMIC DNA]</scope>
    <source>
        <strain>ATCC 204508 / S288c</strain>
    </source>
</reference>
<reference key="2">
    <citation type="journal article" date="2014" name="G3 (Bethesda)">
        <title>The reference genome sequence of Saccharomyces cerevisiae: Then and now.</title>
        <authorList>
            <person name="Engel S.R."/>
            <person name="Dietrich F.S."/>
            <person name="Fisk D.G."/>
            <person name="Binkley G."/>
            <person name="Balakrishnan R."/>
            <person name="Costanzo M.C."/>
            <person name="Dwight S.S."/>
            <person name="Hitz B.C."/>
            <person name="Karra K."/>
            <person name="Nash R.S."/>
            <person name="Weng S."/>
            <person name="Wong E.D."/>
            <person name="Lloyd P."/>
            <person name="Skrzypek M.S."/>
            <person name="Miyasato S.R."/>
            <person name="Simison M."/>
            <person name="Cherry J.M."/>
        </authorList>
    </citation>
    <scope>GENOME REANNOTATION</scope>
    <source>
        <strain>ATCC 204508 / S288c</strain>
    </source>
</reference>
<reference key="3">
    <citation type="journal article" date="1996" name="J. Biol. Chem.">
        <title>Genetic and phenotypic overlap between autophagy and the cytoplasm to vacuole protein targeting pathway.</title>
        <authorList>
            <person name="Harding T.M."/>
            <person name="Hefner-Gravink A."/>
            <person name="Thumm M."/>
            <person name="Klionsky D.J."/>
        </authorList>
    </citation>
    <scope>FUNCTION</scope>
</reference>
<reference key="4">
    <citation type="journal article" date="2000" name="J. Cell Biol.">
        <title>Tor-mediated induction of autophagy via an Apg1 protein kinase complex.</title>
        <authorList>
            <person name="Kamada Y."/>
            <person name="Funakoshi T."/>
            <person name="Shintani T."/>
            <person name="Nagano K."/>
            <person name="Ohsumi M."/>
            <person name="Ohsumi Y."/>
        </authorList>
    </citation>
    <scope>FUNCTION</scope>
    <scope>INTERACTION WITH ATG1</scope>
</reference>
<reference key="5">
    <citation type="journal article" date="2001" name="J. Biol. Chem.">
        <title>Vacuolar localization of oligomeric alpha-mannosidase requires the cytoplasm to vacuole targeting and autophagy pathway components in Saccharomyces cerevisiae.</title>
        <authorList>
            <person name="Hutchins M.U."/>
            <person name="Klionsky D.J."/>
        </authorList>
    </citation>
    <scope>FUNCTION</scope>
</reference>
<reference key="6">
    <citation type="journal article" date="2001" name="J. Cell Biol.">
        <title>Cvt9/Gsa9 functions in sequestering selective cytosolic cargo destined for the vacuole.</title>
        <authorList>
            <person name="Kim J."/>
            <person name="Kamada Y."/>
            <person name="Stromhaug P.E."/>
            <person name="Guan J."/>
            <person name="Hefner-Gravink A."/>
            <person name="Baba M."/>
            <person name="Scott S.V."/>
            <person name="Ohsumi Y."/>
            <person name="Dunn W.A. Jr."/>
            <person name="Klionsky D.J."/>
        </authorList>
    </citation>
    <scope>FUNCTION</scope>
    <scope>SUBCELLULAR LOCATION</scope>
</reference>
<reference key="7">
    <citation type="journal article" date="2002" name="Dev. Cell">
        <title>Mechanism of cargo selection in the cytoplasm to vacuole targeting pathway.</title>
        <authorList>
            <person name="Shintani T."/>
            <person name="Huang W.-P."/>
            <person name="Stromhaug P.E."/>
            <person name="Klionsky D.J."/>
        </authorList>
    </citation>
    <scope>FUNCTION</scope>
    <scope>INTERACTION WITH ATG19</scope>
</reference>
<reference key="8">
    <citation type="journal article" date="2002" name="J. Biol. Chem.">
        <title>Convergence of multiple autophagy and cytoplasm to vacuole targeting components to a perivacuolar membrane compartment prior to de novo vesicle formation.</title>
        <authorList>
            <person name="Kim J."/>
            <person name="Huang W.-P."/>
            <person name="Stromhaug P.E."/>
            <person name="Klionsky D.J."/>
        </authorList>
    </citation>
    <scope>SUBCELLULAR LOCATION</scope>
</reference>
<reference key="9">
    <citation type="journal article" date="2003" name="Dev. Cell">
        <title>A unified nomenclature for yeast autophagy-related genes.</title>
        <authorList>
            <person name="Klionsky D.J."/>
            <person name="Cregg J.M."/>
            <person name="Dunn W.A. Jr."/>
            <person name="Emr S.D."/>
            <person name="Sakai Y."/>
            <person name="Sandoval I.V."/>
            <person name="Sibirny A."/>
            <person name="Subramani S."/>
            <person name="Thumm M."/>
            <person name="Veenhuis M."/>
            <person name="Ohsumi Y."/>
        </authorList>
    </citation>
    <scope>NOMENCLATURE</scope>
</reference>
<reference key="10">
    <citation type="journal article" date="2003" name="Nature">
        <title>Global analysis of protein localization in budding yeast.</title>
        <authorList>
            <person name="Huh W.-K."/>
            <person name="Falvo J.V."/>
            <person name="Gerke L.C."/>
            <person name="Carroll A.S."/>
            <person name="Howson R.W."/>
            <person name="Weissman J.S."/>
            <person name="O'Shea E.K."/>
        </authorList>
    </citation>
    <scope>SUBCELLULAR LOCATION [LARGE SCALE ANALYSIS]</scope>
</reference>
<reference key="11">
    <citation type="journal article" date="2003" name="Nature">
        <title>Global analysis of protein expression in yeast.</title>
        <authorList>
            <person name="Ghaemmaghami S."/>
            <person name="Huh W.-K."/>
            <person name="Bower K."/>
            <person name="Howson R.W."/>
            <person name="Belle A."/>
            <person name="Dephoure N."/>
            <person name="O'Shea E.K."/>
            <person name="Weissman J.S."/>
        </authorList>
    </citation>
    <scope>LEVEL OF PROTEIN EXPRESSION [LARGE SCALE ANALYSIS]</scope>
</reference>
<reference key="12">
    <citation type="journal article" date="2004" name="J. Biol. Chem.">
        <title>Cargo proteins facilitate the formation of transport vesicles in the cytoplasm to vacuole targeting pathway.</title>
        <authorList>
            <person name="Shintani T."/>
            <person name="Klionsky D.J."/>
        </authorList>
    </citation>
    <scope>FUNCTION</scope>
</reference>
<reference key="13">
    <citation type="journal article" date="2005" name="Mol. Biol. Cell">
        <title>Atg11 links cargo to the vesicle-forming machinery in the cytoplasm to vacuole targeting pathway.</title>
        <authorList>
            <person name="Yorimitsu T."/>
            <person name="Klionsky D.J."/>
        </authorList>
    </citation>
    <scope>SUBCELLULAR LOCATION</scope>
    <scope>INTERACTION WITH ATG17; ATG19 AND ATG20</scope>
    <scope>FUNCTION</scope>
</reference>
<reference key="14">
    <citation type="journal article" date="2006" name="J. Biol. Chem.">
        <title>Endoplasmic reticulum stress triggers autophagy.</title>
        <authorList>
            <person name="Yorimitsu T."/>
            <person name="Nair U."/>
            <person name="Yang Z."/>
            <person name="Klionsky D.J."/>
        </authorList>
    </citation>
    <scope>FUNCTION</scope>
</reference>
<reference key="15">
    <citation type="journal article" date="2006" name="J. Cell Biol.">
        <title>Recruitment of Atg9 to the preautophagosomal structure by Atg11 is essential for selective autophagy in budding yeast.</title>
        <authorList>
            <person name="He C."/>
            <person name="Song H."/>
            <person name="Yorimitsu T."/>
            <person name="Monastyrska I."/>
            <person name="Yen W.-L."/>
            <person name="Legakis J.E."/>
            <person name="Klionsky D.J."/>
        </authorList>
    </citation>
    <scope>FUNCTION</scope>
    <scope>INTERACTION WITH ATG9</scope>
</reference>
<reference key="16">
    <citation type="journal article" date="2007" name="Autophagy">
        <title>Atg26 is not involved in autophagy-related pathways in Saccharomyces cerevisiae.</title>
        <authorList>
            <person name="Cao Y."/>
            <person name="Klionsky D.J."/>
        </authorList>
    </citation>
    <scope>FUNCTION</scope>
</reference>
<reference key="17">
    <citation type="journal article" date="2007" name="Genes Cells">
        <title>Hierarchy of Atg proteins in pre-autophagosomal structure organization.</title>
        <authorList>
            <person name="Suzuki K."/>
            <person name="Kubota Y."/>
            <person name="Sekito T."/>
            <person name="Ohsumi Y."/>
        </authorList>
    </citation>
    <scope>FUNCTION</scope>
</reference>
<reference key="18">
    <citation type="journal article" date="2007" name="Mol. Biol. Cell">
        <title>Atg19 mediates a dual interaction cargo sorting mechanism in selective autophagy.</title>
        <authorList>
            <person name="Chang C.Y."/>
            <person name="Huang W.P."/>
        </authorList>
    </citation>
    <scope>FUNCTION</scope>
    <scope>INTERACTION WITH ATG9</scope>
</reference>
<reference key="19">
    <citation type="journal article" date="2008" name="Autophagy">
        <title>Localization of autophagy-related proteins in yeast using a versatile plasmid-based resource of fluorescent protein fusions.</title>
        <authorList>
            <person name="Ma J."/>
            <person name="Bharucha N."/>
            <person name="Dobry C.J."/>
            <person name="Frisch R.L."/>
            <person name="Lawson S."/>
            <person name="Kumar A."/>
        </authorList>
    </citation>
    <scope>FUNCTION</scope>
</reference>
<reference key="20">
    <citation type="journal article" date="2008" name="J. Cell Biol.">
        <title>Quantitative analysis of autophagy-related protein stoichiometry by fluorescence microscopy.</title>
        <authorList>
            <person name="Geng J."/>
            <person name="Baba M."/>
            <person name="Nair U."/>
            <person name="Klionsky D.J."/>
        </authorList>
    </citation>
    <scope>SUBCELLULAR LOCATION</scope>
    <scope>FUNCTION</scope>
</reference>
<reference key="21">
    <citation type="journal article" date="2008" name="J. Cell Biol.">
        <title>In vivo reconstitution of autophagy in Saccharomyces cerevisiae.</title>
        <authorList>
            <person name="Cao Y."/>
            <person name="Cheong H."/>
            <person name="Song H."/>
            <person name="Klionsky D.J."/>
        </authorList>
    </citation>
    <scope>FUNCTION</scope>
    <scope>SUBCELLULAR LOCATION</scope>
</reference>
<reference key="22">
    <citation type="journal article" date="2008" name="J. Biol. Chem.">
        <title>Mitophagy in yeast occurs through a selective mechanism.</title>
        <authorList>
            <person name="Kanki T."/>
            <person name="Klionsky D.J."/>
        </authorList>
    </citation>
    <scope>FUNCTION</scope>
</reference>
<reference key="23">
    <citation type="journal article" date="2008" name="Mol. Biol. Cell">
        <title>The Atg1 kinase complex is involved in the regulation of protein recruitment to initiate sequestering vesicle formation for nonspecific autophagy in Saccharomyces cerevisiae.</title>
        <authorList>
            <person name="Cheong H."/>
            <person name="Nair U."/>
            <person name="Geng J."/>
            <person name="Klionsky D.J."/>
        </authorList>
    </citation>
    <scope>FUNCTION</scope>
</reference>
<reference key="24">
    <citation type="journal article" date="2008" name="Mol. Biol. Cell">
        <title>Organization of the pre-autophagosomal structure responsible for autophagosome formation.</title>
        <authorList>
            <person name="Kawamata T."/>
            <person name="Kamada Y."/>
            <person name="Kabeya Y."/>
            <person name="Sekito T."/>
            <person name="Ohsumi Y."/>
        </authorList>
    </citation>
    <scope>FUNCTION</scope>
</reference>
<reference key="25">
    <citation type="journal article" date="2008" name="Mol. Biol. Cell">
        <title>Piecemeal microautophagy of the nucleus requires the core macroautophagy genes.</title>
        <authorList>
            <person name="Krick R."/>
            <person name="Muehe Y."/>
            <person name="Prick T."/>
            <person name="Bremer S."/>
            <person name="Schlotterhose P."/>
            <person name="Eskelinen E.L."/>
            <person name="Millen J."/>
            <person name="Goldfarb D.S."/>
            <person name="Thumm M."/>
        </authorList>
    </citation>
    <scope>FUNCTION</scope>
</reference>
<reference key="26">
    <citation type="journal article" date="2008" name="Mol. Cell. Proteomics">
        <title>A multidimensional chromatography technology for in-depth phosphoproteome analysis.</title>
        <authorList>
            <person name="Albuquerque C.P."/>
            <person name="Smolka M.B."/>
            <person name="Payne S.H."/>
            <person name="Bafna V."/>
            <person name="Eng J."/>
            <person name="Zhou H."/>
        </authorList>
    </citation>
    <scope>IDENTIFICATION BY MASS SPECTROMETRY [LARGE SCALE ANALYSIS]</scope>
</reference>
<reference key="27">
    <citation type="journal article" date="2009" name="Biochem. Biophys. Res. Commun.">
        <title>Lap3 is a selective target of autophagy in yeast, Saccharomyces cerevisiae.</title>
        <authorList>
            <person name="Kageyama T."/>
            <person name="Suzuki K."/>
            <person name="Ohsumi Y."/>
        </authorList>
    </citation>
    <scope>FUNCTION</scope>
</reference>
<reference key="28">
    <citation type="journal article" date="2009" name="Cell">
        <title>Protein acetylation microarray reveals that NuA4 controls key metabolic target regulating gluconeogenesis.</title>
        <authorList>
            <person name="Lin Y.Y."/>
            <person name="Lu J.Y."/>
            <person name="Zhang J."/>
            <person name="Walter W."/>
            <person name="Dang W."/>
            <person name="Wan J."/>
            <person name="Tao S.C."/>
            <person name="Qian J."/>
            <person name="Zhao Y."/>
            <person name="Boeke J.D."/>
            <person name="Berger S.L."/>
            <person name="Zhu H."/>
        </authorList>
    </citation>
    <scope>ACETYLATION BY NUA4</scope>
</reference>
<reference key="29">
    <citation type="journal article" date="2009" name="Dev. Cell">
        <title>Mitochondria-anchored receptor Atg32 mediates degradation of mitochondria via selective autophagy.</title>
        <authorList>
            <person name="Okamoto K."/>
            <person name="Kondo-Okamoto N."/>
            <person name="Ohsumi Y."/>
        </authorList>
    </citation>
    <scope>FUNCTION</scope>
    <scope>INTERACTION WITH ATG32</scope>
</reference>
<reference key="30">
    <citation type="journal article" date="2009" name="Dev. Cell">
        <title>Atg32 is a mitochondrial protein that confers selectivity during mitophagy.</title>
        <authorList>
            <person name="Kanki T."/>
            <person name="Wang K."/>
            <person name="Cao Y."/>
            <person name="Baba M."/>
            <person name="Klionsky D.J."/>
        </authorList>
    </citation>
    <scope>FUNCTION</scope>
    <scope>INTERACTION WITH ATG32</scope>
</reference>
<reference key="31">
    <citation type="journal article" date="2009" name="Genes Cells">
        <title>Atg17 recruits Atg9 to organize the pre-autophagosomal structure.</title>
        <authorList>
            <person name="Sekito T."/>
            <person name="Kawamata T."/>
            <person name="Ichikawa R."/>
            <person name="Suzuki K."/>
            <person name="Ohsumi Y."/>
        </authorList>
    </citation>
    <scope>FUNCTION</scope>
    <scope>INTERACTION WITH ATG9</scope>
</reference>
<reference key="32">
    <citation type="journal article" date="2010" name="Autophagy">
        <title>Induction of autophagic flux by amino acid deprivation is distinct from nitrogen starvation-induced macroautophagy.</title>
        <authorList>
            <person name="Ecker N."/>
            <person name="Mor A."/>
            <person name="Journo D."/>
            <person name="Abeliovich H."/>
        </authorList>
    </citation>
    <scope>FUNCTION</scope>
</reference>
<reference key="33">
    <citation type="journal article" date="2010" name="J. Biol. Chem.">
        <title>Selective transport of alpha-mannosidase by autophagic pathways: identification of a novel receptor, Atg34p.</title>
        <authorList>
            <person name="Suzuki K."/>
            <person name="Kondo C."/>
            <person name="Morimoto M."/>
            <person name="Ohsumi Y."/>
        </authorList>
    </citation>
    <scope>INTERACTION WITH ATG34</scope>
</reference>
<reference key="34">
    <citation type="journal article" date="2010" name="J. Cell Biol.">
        <title>An Atg9-containing compartment that functions in the early steps of autophagosome biogenesis.</title>
        <authorList>
            <person name="Mari M."/>
            <person name="Griffith J."/>
            <person name="Rieter E."/>
            <person name="Krishnappa L."/>
            <person name="Klionsky D.J."/>
            <person name="Reggiori F."/>
        </authorList>
    </citation>
    <scope>FUNCTION</scope>
</reference>
<reference key="35">
    <citation type="journal article" date="2011" name="J. Biol. Chem.">
        <title>Aspartyl aminopeptidase is imported from the cytoplasm to the vacuole by selective autophagy in Saccharomyces cerevisiae.</title>
        <authorList>
            <person name="Yuga M."/>
            <person name="Gomi K."/>
            <person name="Klionsky D.J."/>
            <person name="Shintani T."/>
        </authorList>
    </citation>
    <scope>FUNCTION</scope>
</reference>
<reference key="36">
    <citation type="journal article" date="2011" name="J. Cell Sci.">
        <title>Mitophagy in yeast is independent of mitochondrial fission and requires the stress response gene WHI2.</title>
        <authorList>
            <person name="Mendl N."/>
            <person name="Occhipinti A."/>
            <person name="Muller M."/>
            <person name="Wild P."/>
            <person name="Dikic I."/>
            <person name="Reichert A.S."/>
        </authorList>
    </citation>
    <scope>FUNCTION</scope>
</reference>
<reference key="37">
    <citation type="journal article" date="2011" name="Mol. Biol. Cell">
        <title>Phosphorylation of Serine 114 on Atg32 mediates mitophagy.</title>
        <authorList>
            <person name="Aoki Y."/>
            <person name="Kanki T."/>
            <person name="Hirota Y."/>
            <person name="Kurihara Y."/>
            <person name="Saigusa T."/>
            <person name="Uchiumi T."/>
            <person name="Kang D."/>
        </authorList>
    </citation>
    <scope>INTERACTION WITH ATG32</scope>
    <scope>FUNCTION</scope>
</reference>
<reference key="38">
    <citation type="journal article" date="2012" name="J. Biol. Chem.">
        <title>Mitophagy plays an essential role in reducing mitochondrial production of reactive oxygen species and mutation of mitochondrial DNA by maintaining mitochondrial quantity and quality in yeast.</title>
        <authorList>
            <person name="Kurihara Y."/>
            <person name="Kanki T."/>
            <person name="Aoki Y."/>
            <person name="Hirota Y."/>
            <person name="Saigusa T."/>
            <person name="Uchiumi T."/>
            <person name="Kang D."/>
        </authorList>
    </citation>
    <scope>FUNCTION</scope>
</reference>
<reference key="39">
    <citation type="journal article" date="2012" name="J. Biol. Chem.">
        <title>Autophagy-related protein 32 acts as autophagic degron and directly initiates mitophagy.</title>
        <authorList>
            <person name="Kondo-Okamoto N."/>
            <person name="Noda N.N."/>
            <person name="Suzuki S.W."/>
            <person name="Nakatogawa H."/>
            <person name="Takahashi I."/>
            <person name="Matsunami M."/>
            <person name="Hashimoto A."/>
            <person name="Inagaki F."/>
            <person name="Ohsumi Y."/>
            <person name="Okamoto K."/>
        </authorList>
    </citation>
    <scope>FUNCTION</scope>
    <scope>INTERACTION WITH ATG32</scope>
</reference>
<reference key="40">
    <citation type="journal article" date="2012" name="PLoS ONE">
        <title>A late form of nucleophagy in Saccharomyces cerevisiae.</title>
        <authorList>
            <person name="Mijaljica D."/>
            <person name="Prescott M."/>
            <person name="Devenish R.J."/>
        </authorList>
    </citation>
    <scope>FUNCTION</scope>
</reference>
<reference key="41">
    <citation type="journal article" date="2012" name="Proc. Natl. Acad. Sci. U.S.A.">
        <title>Regulation of selective autophagy onset by a Ypt/Rab GTPase module.</title>
        <authorList>
            <person name="Lipatova Z."/>
            <person name="Belogortseva N."/>
            <person name="Zhang X.Q."/>
            <person name="Kim J."/>
            <person name="Taussig D."/>
            <person name="Segev N."/>
        </authorList>
    </citation>
    <scope>INTERACTION WITH YPT1</scope>
    <scope>SUBCELLULAR LOCATION</scope>
    <scope>FUNCTION</scope>
</reference>
<reference key="42">
    <citation type="journal article" date="2013" name="EMBO Rep.">
        <title>Phosphorylation of mitophagy and pexophagy receptors coordinates their interaction with Atg8 and Atg11.</title>
        <authorList>
            <person name="Farre J.C."/>
            <person name="Burkenroad A."/>
            <person name="Burnett S.F."/>
            <person name="Subramani S."/>
        </authorList>
    </citation>
    <scope>INTERACTION WITH ATG30 AND ATG36</scope>
    <scope>SUBCELLULAR LOCATION</scope>
    <scope>FUNCTION</scope>
</reference>
<reference key="43">
    <citation type="journal article" date="2013" name="Exp. Gerontol.">
        <title>Autophagy and leucine promote chronological longevity and respiration proficiency during calorie restriction in yeast.</title>
        <authorList>
            <person name="Aris J.P."/>
            <person name="Alvers A.L."/>
            <person name="Ferraiuolo R.A."/>
            <person name="Fishwick L.K."/>
            <person name="Hanvivatpong A."/>
            <person name="Hu D."/>
            <person name="Kirlew C."/>
            <person name="Leonard M.T."/>
            <person name="Losin K.J."/>
            <person name="Marraffini M."/>
            <person name="Seo A.Y."/>
            <person name="Swanberg V."/>
            <person name="Westcott J.L."/>
            <person name="Wood M.S."/>
            <person name="Leeuwenburgh C."/>
            <person name="Dunn W.A. Jr."/>
        </authorList>
    </citation>
    <scope>FUNCTION</scope>
</reference>
<reference key="44">
    <citation type="journal article" date="2019" name="PLoS Biol.">
        <title>Atg11 tethers Atg9 vesicles to initiate selective autophagy.</title>
        <authorList>
            <person name="Matscheko N."/>
            <person name="Mayrhofer P."/>
            <person name="Rao Y."/>
            <person name="Beier V."/>
            <person name="Wollert T."/>
        </authorList>
    </citation>
    <scope>FUNCTION</scope>
    <scope>INTERACTION WITH ATG9</scope>
</reference>
<reference key="45">
    <citation type="journal article" date="2024" name="Autophagy">
        <title>Prohibitins, Phb1 and Phb2, function as Atg8 receptors to support yeast mitophagy and also play a negative regulatory role in Atg32 processing.</title>
        <authorList>
            <person name="Garcia-Chavez D."/>
            <person name="Dominguez-Martin E."/>
            <person name="Kawasaki L."/>
            <person name="Ongay-Larios L."/>
            <person name="Ruelas-Ramirez H."/>
            <person name="Mendoza-Martinez A.E."/>
            <person name="Pardo J.P."/>
            <person name="Funes S."/>
            <person name="Coria R."/>
        </authorList>
    </citation>
    <scope>INTERACTION WITH ATG32</scope>
</reference>